<gene>
    <name evidence="1" type="primary">smg</name>
    <name type="ordered locus">Shewmr4_0032</name>
</gene>
<organism>
    <name type="scientific">Shewanella sp. (strain MR-4)</name>
    <dbReference type="NCBI Taxonomy" id="60480"/>
    <lineage>
        <taxon>Bacteria</taxon>
        <taxon>Pseudomonadati</taxon>
        <taxon>Pseudomonadota</taxon>
        <taxon>Gammaproteobacteria</taxon>
        <taxon>Alteromonadales</taxon>
        <taxon>Shewanellaceae</taxon>
        <taxon>Shewanella</taxon>
    </lineage>
</organism>
<dbReference type="EMBL" id="CP000446">
    <property type="protein sequence ID" value="ABI37114.1"/>
    <property type="molecule type" value="Genomic_DNA"/>
</dbReference>
<dbReference type="RefSeq" id="WP_011620868.1">
    <property type="nucleotide sequence ID" value="NC_008321.1"/>
</dbReference>
<dbReference type="SMR" id="Q0HPA3"/>
<dbReference type="KEGG" id="she:Shewmr4_0032"/>
<dbReference type="HOGENOM" id="CLU_133242_0_0_6"/>
<dbReference type="HAMAP" id="MF_00598">
    <property type="entry name" value="Smg"/>
    <property type="match status" value="1"/>
</dbReference>
<dbReference type="InterPro" id="IPR007456">
    <property type="entry name" value="Smg"/>
</dbReference>
<dbReference type="NCBIfam" id="NF002897">
    <property type="entry name" value="PRK03430.1"/>
    <property type="match status" value="1"/>
</dbReference>
<dbReference type="PANTHER" id="PTHR38692">
    <property type="entry name" value="PROTEIN SMG"/>
    <property type="match status" value="1"/>
</dbReference>
<dbReference type="PANTHER" id="PTHR38692:SF1">
    <property type="entry name" value="PROTEIN SMG"/>
    <property type="match status" value="1"/>
</dbReference>
<dbReference type="Pfam" id="PF04361">
    <property type="entry name" value="DUF494"/>
    <property type="match status" value="1"/>
</dbReference>
<evidence type="ECO:0000255" key="1">
    <source>
        <dbReference type="HAMAP-Rule" id="MF_00598"/>
    </source>
</evidence>
<proteinExistence type="inferred from homology"/>
<protein>
    <recommendedName>
        <fullName evidence="1">Protein Smg homolog</fullName>
    </recommendedName>
</protein>
<feature type="chain" id="PRO_1000025670" description="Protein Smg homolog">
    <location>
        <begin position="1"/>
        <end position="158"/>
    </location>
</feature>
<reference key="1">
    <citation type="submission" date="2006-08" db="EMBL/GenBank/DDBJ databases">
        <title>Complete sequence of Shewanella sp. MR-4.</title>
        <authorList>
            <consortium name="US DOE Joint Genome Institute"/>
            <person name="Copeland A."/>
            <person name="Lucas S."/>
            <person name="Lapidus A."/>
            <person name="Barry K."/>
            <person name="Detter J.C."/>
            <person name="Glavina del Rio T."/>
            <person name="Hammon N."/>
            <person name="Israni S."/>
            <person name="Dalin E."/>
            <person name="Tice H."/>
            <person name="Pitluck S."/>
            <person name="Kiss H."/>
            <person name="Brettin T."/>
            <person name="Bruce D."/>
            <person name="Han C."/>
            <person name="Tapia R."/>
            <person name="Gilna P."/>
            <person name="Schmutz J."/>
            <person name="Larimer F."/>
            <person name="Land M."/>
            <person name="Hauser L."/>
            <person name="Kyrpides N."/>
            <person name="Mikhailova N."/>
            <person name="Nealson K."/>
            <person name="Konstantinidis K."/>
            <person name="Klappenbach J."/>
            <person name="Tiedje J."/>
            <person name="Richardson P."/>
        </authorList>
    </citation>
    <scope>NUCLEOTIDE SEQUENCE [LARGE SCALE GENOMIC DNA]</scope>
    <source>
        <strain>MR-4</strain>
    </source>
</reference>
<sequence length="158" mass="18808">MFDILMYLFENYVHSEVELLVDEDELTKELTRAGFHQSEILKALTWLERLAELQEGDKPYLCNHDQHSFRIYTKEEMEKLDVECRGFLLFLEQVKVLNVETREMVIDRVMELDEPALILEDLKWVILMVLFNAPGHESAYEQMEDLIFEQPEEGRLHS</sequence>
<name>SMG_SHESM</name>
<comment type="similarity">
    <text evidence="1">Belongs to the Smg family.</text>
</comment>
<accession>Q0HPA3</accession>